<evidence type="ECO:0000255" key="1">
    <source>
        <dbReference type="HAMAP-Rule" id="MF_01616"/>
    </source>
</evidence>
<protein>
    <recommendedName>
        <fullName evidence="1">Membrane-bound lytic murein transglycosylase C</fullName>
        <ecNumber evidence="1">4.2.2.n1</ecNumber>
    </recommendedName>
    <alternativeName>
        <fullName evidence="1">Murein lyase C</fullName>
    </alternativeName>
</protein>
<keyword id="KW-0998">Cell outer membrane</keyword>
<keyword id="KW-0961">Cell wall biogenesis/degradation</keyword>
<keyword id="KW-0449">Lipoprotein</keyword>
<keyword id="KW-0456">Lyase</keyword>
<keyword id="KW-0472">Membrane</keyword>
<keyword id="KW-0564">Palmitate</keyword>
<keyword id="KW-0732">Signal</keyword>
<feature type="signal peptide" evidence="1">
    <location>
        <begin position="1"/>
        <end position="16"/>
    </location>
</feature>
<feature type="chain" id="PRO_1000185924" description="Membrane-bound lytic murein transglycosylase C">
    <location>
        <begin position="17"/>
        <end position="359"/>
    </location>
</feature>
<feature type="lipid moiety-binding region" description="N-palmitoyl cysteine" evidence="1">
    <location>
        <position position="17"/>
    </location>
</feature>
<feature type="lipid moiety-binding region" description="S-diacylglycerol cysteine" evidence="1">
    <location>
        <position position="17"/>
    </location>
</feature>
<gene>
    <name evidence="1" type="primary">mltC</name>
    <name type="ordered locus">ECDH10B_3138</name>
</gene>
<comment type="function">
    <text evidence="1">Murein-degrading enzyme. May play a role in recycling of muropeptides during cell elongation and/or cell division.</text>
</comment>
<comment type="catalytic activity">
    <reaction evidence="1">
        <text>Exolytic cleavage of the (1-&gt;4)-beta-glycosidic linkage between N-acetylmuramic acid (MurNAc) and N-acetylglucosamine (GlcNAc) residues in peptidoglycan, from either the reducing or the non-reducing ends of the peptidoglycan chains, with concomitant formation of a 1,6-anhydrobond in the MurNAc residue.</text>
        <dbReference type="EC" id="4.2.2.n1"/>
    </reaction>
</comment>
<comment type="subcellular location">
    <subcellularLocation>
        <location evidence="1">Cell outer membrane</location>
        <topology evidence="1">Lipid-anchor</topology>
    </subcellularLocation>
</comment>
<comment type="similarity">
    <text evidence="1">Belongs to the transglycosylase Slt family.</text>
</comment>
<reference key="1">
    <citation type="journal article" date="2008" name="J. Bacteriol.">
        <title>The complete genome sequence of Escherichia coli DH10B: insights into the biology of a laboratory workhorse.</title>
        <authorList>
            <person name="Durfee T."/>
            <person name="Nelson R."/>
            <person name="Baldwin S."/>
            <person name="Plunkett G. III"/>
            <person name="Burland V."/>
            <person name="Mau B."/>
            <person name="Petrosino J.F."/>
            <person name="Qin X."/>
            <person name="Muzny D.M."/>
            <person name="Ayele M."/>
            <person name="Gibbs R.A."/>
            <person name="Csorgo B."/>
            <person name="Posfai G."/>
            <person name="Weinstock G.M."/>
            <person name="Blattner F.R."/>
        </authorList>
    </citation>
    <scope>NUCLEOTIDE SEQUENCE [LARGE SCALE GENOMIC DNA]</scope>
    <source>
        <strain>K12 / DH10B</strain>
    </source>
</reference>
<accession>B1XFC3</accession>
<dbReference type="EC" id="4.2.2.n1" evidence="1"/>
<dbReference type="EMBL" id="CP000948">
    <property type="protein sequence ID" value="ACB04057.1"/>
    <property type="molecule type" value="Genomic_DNA"/>
</dbReference>
<dbReference type="RefSeq" id="WP_000760323.1">
    <property type="nucleotide sequence ID" value="NC_010473.1"/>
</dbReference>
<dbReference type="SMR" id="B1XFC3"/>
<dbReference type="CAZy" id="GH23">
    <property type="family name" value="Glycoside Hydrolase Family 23"/>
</dbReference>
<dbReference type="GeneID" id="86861053"/>
<dbReference type="KEGG" id="ecd:ECDH10B_3138"/>
<dbReference type="HOGENOM" id="CLU_044583_0_0_6"/>
<dbReference type="GO" id="GO:0009279">
    <property type="term" value="C:cell outer membrane"/>
    <property type="evidence" value="ECO:0007669"/>
    <property type="project" value="UniProtKB-SubCell"/>
</dbReference>
<dbReference type="GO" id="GO:0016798">
    <property type="term" value="F:hydrolase activity, acting on glycosyl bonds"/>
    <property type="evidence" value="ECO:0007669"/>
    <property type="project" value="InterPro"/>
</dbReference>
<dbReference type="GO" id="GO:0008933">
    <property type="term" value="F:peptidoglycan lytic transglycosylase activity"/>
    <property type="evidence" value="ECO:0007669"/>
    <property type="project" value="UniProtKB-UniRule"/>
</dbReference>
<dbReference type="GO" id="GO:0016998">
    <property type="term" value="P:cell wall macromolecule catabolic process"/>
    <property type="evidence" value="ECO:0007669"/>
    <property type="project" value="UniProtKB-UniRule"/>
</dbReference>
<dbReference type="GO" id="GO:0071555">
    <property type="term" value="P:cell wall organization"/>
    <property type="evidence" value="ECO:0007669"/>
    <property type="project" value="UniProtKB-KW"/>
</dbReference>
<dbReference type="GO" id="GO:0000270">
    <property type="term" value="P:peptidoglycan metabolic process"/>
    <property type="evidence" value="ECO:0007669"/>
    <property type="project" value="InterPro"/>
</dbReference>
<dbReference type="CDD" id="cd16893">
    <property type="entry name" value="LT_MltC_MltE"/>
    <property type="match status" value="1"/>
</dbReference>
<dbReference type="FunFam" id="1.10.530.10:FF:000002">
    <property type="entry name" value="Membrane-bound lytic murein transglycosylase C"/>
    <property type="match status" value="1"/>
</dbReference>
<dbReference type="Gene3D" id="1.10.530.10">
    <property type="match status" value="1"/>
</dbReference>
<dbReference type="HAMAP" id="MF_01616">
    <property type="entry name" value="MltC"/>
    <property type="match status" value="1"/>
</dbReference>
<dbReference type="InterPro" id="IPR023346">
    <property type="entry name" value="Lysozyme-like_dom_sf"/>
</dbReference>
<dbReference type="InterPro" id="IPR023664">
    <property type="entry name" value="Murein_transglycosylaseC"/>
</dbReference>
<dbReference type="InterPro" id="IPR024570">
    <property type="entry name" value="Murein_transglycosylaseC_N"/>
</dbReference>
<dbReference type="InterPro" id="IPR000189">
    <property type="entry name" value="Transglyc_AS"/>
</dbReference>
<dbReference type="InterPro" id="IPR008258">
    <property type="entry name" value="Transglycosylase_SLT_dom_1"/>
</dbReference>
<dbReference type="NCBIfam" id="NF008670">
    <property type="entry name" value="PRK11671.1"/>
    <property type="match status" value="1"/>
</dbReference>
<dbReference type="PANTHER" id="PTHR37423:SF2">
    <property type="entry name" value="MEMBRANE-BOUND LYTIC MUREIN TRANSGLYCOSYLASE C"/>
    <property type="match status" value="1"/>
</dbReference>
<dbReference type="PANTHER" id="PTHR37423">
    <property type="entry name" value="SOLUBLE LYTIC MUREIN TRANSGLYCOSYLASE-RELATED"/>
    <property type="match status" value="1"/>
</dbReference>
<dbReference type="Pfam" id="PF11873">
    <property type="entry name" value="Mltc_N"/>
    <property type="match status" value="1"/>
</dbReference>
<dbReference type="Pfam" id="PF01464">
    <property type="entry name" value="SLT"/>
    <property type="match status" value="1"/>
</dbReference>
<dbReference type="SUPFAM" id="SSF53955">
    <property type="entry name" value="Lysozyme-like"/>
    <property type="match status" value="1"/>
</dbReference>
<dbReference type="PROSITE" id="PS51257">
    <property type="entry name" value="PROKAR_LIPOPROTEIN"/>
    <property type="match status" value="1"/>
</dbReference>
<dbReference type="PROSITE" id="PS00922">
    <property type="entry name" value="TRANSGLYCOSYLASE"/>
    <property type="match status" value="1"/>
</dbReference>
<sequence length="359" mass="40113">MKKYLALALIAPLLISCSTTKKGDTYNEAWVKDTNGFDILMGQFAHNIENIWGFKEVVIAGPKDYVKYTDQYQTRSHINFDDGTITIETIAGTEPAAHLRRAIIKTLLMGDDPSSVDLYSDVDDITISKEPFLYGQVVDNTGQPIRWEGRASNFADYLLKNRLKSRSNGLRIIYSVTINMVPNHLDKRAHKYLGMVRQASRKYGVDESLILAIMQTESSFNPYAVSRSDALGLMQVVQHTAGKDVFRSQGKSGTPSRSFLFDPASNIDTGTAYLAMLNNVYLGGIDNPTSRRYAVITAYNGGAGSVLRVFSNDKIQAANIINTMTPGDVYQTLTTRHPSAESRRYLYKVNTAQKSYRRR</sequence>
<name>MLTC_ECODH</name>
<proteinExistence type="inferred from homology"/>
<organism>
    <name type="scientific">Escherichia coli (strain K12 / DH10B)</name>
    <dbReference type="NCBI Taxonomy" id="316385"/>
    <lineage>
        <taxon>Bacteria</taxon>
        <taxon>Pseudomonadati</taxon>
        <taxon>Pseudomonadota</taxon>
        <taxon>Gammaproteobacteria</taxon>
        <taxon>Enterobacterales</taxon>
        <taxon>Enterobacteriaceae</taxon>
        <taxon>Escherichia</taxon>
    </lineage>
</organism>